<reference evidence="3" key="1">
    <citation type="journal article" date="2003" name="Peptides">
        <title>Purification and characterization of alpha- and beta-benincasins, arginine/glutamate-rich peptides with translation-inhibiting activity from wax gourd seeds.</title>
        <authorList>
            <person name="Ng T.B."/>
            <person name="Parkash A."/>
            <person name="Tso W.W."/>
        </authorList>
    </citation>
    <scope>PROTEIN SEQUENCE</scope>
    <scope>FUNCTION</scope>
    <source>
        <strain evidence="1">Dong-gua</strain>
        <tissue evidence="1">Seed</tissue>
    </source>
</reference>
<proteinExistence type="evidence at protein level"/>
<keyword id="KW-0929">Antimicrobial</keyword>
<keyword id="KW-0903">Direct protein sequencing</keyword>
<keyword id="KW-0295">Fungicide</keyword>
<evidence type="ECO:0000269" key="1">
    <source>
    </source>
</evidence>
<evidence type="ECO:0000303" key="2">
    <source>
    </source>
</evidence>
<evidence type="ECO:0000305" key="3"/>
<protein>
    <recommendedName>
        <fullName>Alpha-benincasin</fullName>
    </recommendedName>
</protein>
<sequence>RDWERREFERRQNELRREQEQRREELL</sequence>
<organism>
    <name type="scientific">Benincasa hispida</name>
    <name type="common">Wax gourd</name>
    <name type="synonym">Cucurbita hispida</name>
    <dbReference type="NCBI Taxonomy" id="102211"/>
    <lineage>
        <taxon>Eukaryota</taxon>
        <taxon>Viridiplantae</taxon>
        <taxon>Streptophyta</taxon>
        <taxon>Embryophyta</taxon>
        <taxon>Tracheophyta</taxon>
        <taxon>Spermatophyta</taxon>
        <taxon>Magnoliopsida</taxon>
        <taxon>eudicotyledons</taxon>
        <taxon>Gunneridae</taxon>
        <taxon>Pentapetalae</taxon>
        <taxon>rosids</taxon>
        <taxon>fabids</taxon>
        <taxon>Cucurbitales</taxon>
        <taxon>Cucurbitaceae</taxon>
        <taxon>Benincaseae</taxon>
        <taxon>Benincasa</taxon>
    </lineage>
</organism>
<feature type="peptide" id="PRO_0000045091" description="Alpha-benincasin">
    <location>
        <begin position="1"/>
        <end position="27" status="greater than"/>
    </location>
</feature>
<feature type="non-terminal residue" evidence="2">
    <location>
        <position position="27"/>
    </location>
</feature>
<comment type="function">
    <text evidence="1">Has weak antifungal activity toward C.comatus and P.piricola but not toward M.arachidicola. Inhibits cell-free translation in rabbit reticulocyte lysate system.</text>
</comment>
<comment type="miscellaneous">
    <text>IC(50) of 20 pM in rabbit reticulocyte.</text>
</comment>
<name>BNCA_BENHI</name>
<accession>P83960</accession>
<dbReference type="GO" id="GO:0050832">
    <property type="term" value="P:defense response to fungus"/>
    <property type="evidence" value="ECO:0000314"/>
    <property type="project" value="UniProtKB"/>
</dbReference>
<dbReference type="GO" id="GO:0031640">
    <property type="term" value="P:killing of cells of another organism"/>
    <property type="evidence" value="ECO:0007669"/>
    <property type="project" value="UniProtKB-KW"/>
</dbReference>
<dbReference type="GO" id="GO:0017148">
    <property type="term" value="P:negative regulation of translation"/>
    <property type="evidence" value="ECO:0000314"/>
    <property type="project" value="UniProtKB"/>
</dbReference>
<dbReference type="GO" id="GO:0006805">
    <property type="term" value="P:xenobiotic metabolic process"/>
    <property type="evidence" value="ECO:0000314"/>
    <property type="project" value="UniProtKB"/>
</dbReference>